<name>OM25_BRUCA</name>
<accession>Q45110</accession>
<sequence>MRTLKSLVIVSAALLPFSATAFAADAIQEQPPVPAPVEVAPQYSWAGGYTGLYLGYGWNKAKTSTVGSIKPDDWKAGAFAGWNFQKDQIVYGVEGDAGYSWAKKSKDGLEVKQGFEGSLRARVGYDLNPVMPYLTAGIAGSQIKLNNGLDGESKFRVGWTAGAGLEAKLTDNILGRVEYRYTQYSNKNYDLAGTTVRNKLDTQDIRVGIGYKF</sequence>
<comment type="subcellular location">
    <subcellularLocation>
        <location>Cell outer membrane</location>
    </subcellularLocation>
</comment>
<comment type="similarity">
    <text evidence="2">Belongs to the Omp25/RopB family.</text>
</comment>
<organism>
    <name type="scientific">Brucella canis</name>
    <dbReference type="NCBI Taxonomy" id="36855"/>
    <lineage>
        <taxon>Bacteria</taxon>
        <taxon>Pseudomonadati</taxon>
        <taxon>Pseudomonadota</taxon>
        <taxon>Alphaproteobacteria</taxon>
        <taxon>Hyphomicrobiales</taxon>
        <taxon>Brucellaceae</taxon>
        <taxon>Brucella/Ochrobactrum group</taxon>
        <taxon>Brucella</taxon>
    </lineage>
</organism>
<reference key="1">
    <citation type="journal article" date="1996" name="Infect. Immun.">
        <title>Nucleotide sequence and expression of the gene encoding the major 25-kilodalton outer membrane protein of Brucella ovis: evidence for antigenic shift, compared with other Brucella species, due to a deletion in the gene.</title>
        <authorList>
            <person name="Cloeckaert A."/>
            <person name="Verger J.M."/>
            <person name="Grayon M."/>
            <person name="Zygmunt M.S."/>
            <person name="Grepinet O."/>
        </authorList>
    </citation>
    <scope>NUCLEOTIDE SEQUENCE [GENOMIC DNA]</scope>
    <source>
        <strain>RM6/66</strain>
    </source>
</reference>
<dbReference type="EMBL" id="U39358">
    <property type="protein sequence ID" value="AAB36692.1"/>
    <property type="molecule type" value="Genomic_DNA"/>
</dbReference>
<dbReference type="SMR" id="Q45110"/>
<dbReference type="GO" id="GO:0009279">
    <property type="term" value="C:cell outer membrane"/>
    <property type="evidence" value="ECO:0007669"/>
    <property type="project" value="UniProtKB-SubCell"/>
</dbReference>
<dbReference type="Gene3D" id="2.40.160.20">
    <property type="match status" value="1"/>
</dbReference>
<dbReference type="InterPro" id="IPR051692">
    <property type="entry name" value="OMP-like"/>
</dbReference>
<dbReference type="InterPro" id="IPR011250">
    <property type="entry name" value="OMP/PagP_b-brl"/>
</dbReference>
<dbReference type="InterPro" id="IPR027385">
    <property type="entry name" value="OMP_b-brl"/>
</dbReference>
<dbReference type="PANTHER" id="PTHR34001">
    <property type="entry name" value="BLL7405 PROTEIN"/>
    <property type="match status" value="1"/>
</dbReference>
<dbReference type="PANTHER" id="PTHR34001:SF3">
    <property type="entry name" value="BLL7405 PROTEIN"/>
    <property type="match status" value="1"/>
</dbReference>
<dbReference type="Pfam" id="PF13505">
    <property type="entry name" value="OMP_b-brl"/>
    <property type="match status" value="1"/>
</dbReference>
<dbReference type="SUPFAM" id="SSF56925">
    <property type="entry name" value="OMPA-like"/>
    <property type="match status" value="1"/>
</dbReference>
<keyword id="KW-0998">Cell outer membrane</keyword>
<keyword id="KW-0472">Membrane</keyword>
<keyword id="KW-0732">Signal</keyword>
<keyword id="KW-0812">Transmembrane</keyword>
<keyword id="KW-1134">Transmembrane beta strand</keyword>
<feature type="signal peptide" evidence="1">
    <location>
        <begin position="1"/>
        <end position="23"/>
    </location>
</feature>
<feature type="chain" id="PRO_0000021879" description="25 kDa outer-membrane immunogenic protein">
    <location>
        <begin position="24"/>
        <end position="213"/>
    </location>
</feature>
<protein>
    <recommendedName>
        <fullName>25 kDa outer-membrane immunogenic protein</fullName>
    </recommendedName>
</protein>
<evidence type="ECO:0000255" key="1"/>
<evidence type="ECO:0000305" key="2"/>
<gene>
    <name type="primary">omp25</name>
</gene>
<proteinExistence type="inferred from homology"/>